<accession>Q58FZ0</accession>
<accession>F4IQW1</accession>
<accession>Q8H1N1</accession>
<accession>Q9ZUS7</accession>
<reference key="1">
    <citation type="journal article" date="1999" name="Nature">
        <title>Sequence and analysis of chromosome 2 of the plant Arabidopsis thaliana.</title>
        <authorList>
            <person name="Lin X."/>
            <person name="Kaul S."/>
            <person name="Rounsley S.D."/>
            <person name="Shea T.P."/>
            <person name="Benito M.-I."/>
            <person name="Town C.D."/>
            <person name="Fujii C.Y."/>
            <person name="Mason T.M."/>
            <person name="Bowman C.L."/>
            <person name="Barnstead M.E."/>
            <person name="Feldblyum T.V."/>
            <person name="Buell C.R."/>
            <person name="Ketchum K.A."/>
            <person name="Lee J.J."/>
            <person name="Ronning C.M."/>
            <person name="Koo H.L."/>
            <person name="Moffat K.S."/>
            <person name="Cronin L.A."/>
            <person name="Shen M."/>
            <person name="Pai G."/>
            <person name="Van Aken S."/>
            <person name="Umayam L."/>
            <person name="Tallon L.J."/>
            <person name="Gill J.E."/>
            <person name="Adams M.D."/>
            <person name="Carrera A.J."/>
            <person name="Creasy T.H."/>
            <person name="Goodman H.M."/>
            <person name="Somerville C.R."/>
            <person name="Copenhaver G.P."/>
            <person name="Preuss D."/>
            <person name="Nierman W.C."/>
            <person name="White O."/>
            <person name="Eisen J.A."/>
            <person name="Salzberg S.L."/>
            <person name="Fraser C.M."/>
            <person name="Venter J.C."/>
        </authorList>
    </citation>
    <scope>NUCLEOTIDE SEQUENCE [LARGE SCALE GENOMIC DNA]</scope>
    <source>
        <strain>cv. Columbia</strain>
    </source>
</reference>
<reference key="2">
    <citation type="journal article" date="2017" name="Plant J.">
        <title>Araport11: a complete reannotation of the Arabidopsis thaliana reference genome.</title>
        <authorList>
            <person name="Cheng C.Y."/>
            <person name="Krishnakumar V."/>
            <person name="Chan A.P."/>
            <person name="Thibaud-Nissen F."/>
            <person name="Schobel S."/>
            <person name="Town C.D."/>
        </authorList>
    </citation>
    <scope>GENOME REANNOTATION</scope>
    <source>
        <strain>cv. Columbia</strain>
    </source>
</reference>
<reference key="3">
    <citation type="submission" date="2005-03" db="EMBL/GenBank/DDBJ databases">
        <authorList>
            <person name="Underwood B.A."/>
            <person name="Xiao Y.-L."/>
            <person name="Moskal W.A. Jr."/>
            <person name="Monaghan E.L."/>
            <person name="Wang W."/>
            <person name="Redman J.C."/>
            <person name="Wu H.C."/>
            <person name="Utterback T."/>
            <person name="Town C.D."/>
        </authorList>
    </citation>
    <scope>NUCLEOTIDE SEQUENCE [LARGE SCALE MRNA] (ISOFORM 1)</scope>
    <source>
        <strain>cv. Columbia</strain>
    </source>
</reference>
<reference key="4">
    <citation type="journal article" date="2002" name="Plant Physiol.">
        <title>Cloning and sequencing of cDNAs for hypothetical genes from chromosome 2 of Arabidopsis.</title>
        <authorList>
            <person name="Xiao Y.-L."/>
            <person name="Malik M."/>
            <person name="Whitelaw C.A."/>
            <person name="Town C.D."/>
        </authorList>
    </citation>
    <scope>NUCLEOTIDE SEQUENCE [LARGE SCALE MRNA] (ISOFORM 1)</scope>
    <source>
        <strain>cv. Columbia</strain>
    </source>
</reference>
<reference key="5">
    <citation type="journal article" date="2010" name="Plant Cell">
        <title>Arabidopsis NPCC6/NaKR1 is a phloem mobile metal binding protein necessary for phloem function and root meristem maintenance.</title>
        <authorList>
            <person name="Tian H."/>
            <person name="Baxter I.R."/>
            <person name="Lahner B."/>
            <person name="Reinders A."/>
            <person name="Salt D.E."/>
            <person name="Ward J.M."/>
        </authorList>
    </citation>
    <scope>GENE FAMILY</scope>
    <scope>NOMENCLATURE</scope>
</reference>
<reference key="6">
    <citation type="journal article" date="2013" name="FEBS J.">
        <title>Heavy metal-associated isoprenylated plant protein (HIPP): characterization of a family of proteins exclusive to plants.</title>
        <authorList>
            <person name="de Abreu-Neto J.B."/>
            <person name="Turchetto-Zolet A.C."/>
            <person name="de Oliveira L.F."/>
            <person name="Zanettini M.H."/>
            <person name="Margis-Pinheiro M."/>
        </authorList>
    </citation>
    <scope>GENE FAMILY</scope>
    <scope>NOMENCLATURE</scope>
</reference>
<sequence>MKGRMFCASQASTAICSSMDHVHKSTTTDEDERNSGRAIDRHNPIIKDGRRSFADDFIKLPTSAEDGEMSNKKLEIYKGRRSITGRRSTGGGGGGGAAALLKLITNDIGLARKSFSCVARPACDLIKTPVGSTRYLLGSDPDSITGSVDQDPAKTVEAEAPAGEDKTLTEKKTTCGDTDQQVVVLKVSLHCRGCEGKVRKHLARMQGVTSFNIDFAAKKVTVTGDITPLEILDSISKVKNAQFWTNPTIPKPNVETQNP</sequence>
<comment type="alternative products">
    <event type="alternative splicing"/>
    <isoform>
        <id>Q58FZ0-1</id>
        <name>1</name>
        <sequence type="displayed"/>
    </isoform>
    <isoform>
        <id>Q58FZ0-2</id>
        <name>2</name>
        <sequence type="described" ref="VSP_058510"/>
    </isoform>
</comment>
<comment type="sequence caution" evidence="5">
    <conflict type="erroneous gene model prediction">
        <sequence resource="EMBL-CDS" id="AAC98058"/>
    </conflict>
</comment>
<gene>
    <name evidence="3" type="primary">NAKR2</name>
    <name evidence="4" type="synonym">HPP03</name>
    <name evidence="6" type="ordered locus">At2g37390</name>
    <name evidence="7" type="ORF">F3G5.18</name>
</gene>
<feature type="chain" id="PRO_0000437274" description="Protein SODIUM POTASSIUM ROOT DEFECTIVE 2">
    <location>
        <begin position="1"/>
        <end position="259"/>
    </location>
</feature>
<feature type="domain" description="HMA" evidence="1">
    <location>
        <begin position="180"/>
        <end position="246"/>
    </location>
</feature>
<feature type="region of interest" description="Disordered" evidence="2">
    <location>
        <begin position="141"/>
        <end position="165"/>
    </location>
</feature>
<feature type="compositionally biased region" description="Basic and acidic residues" evidence="2">
    <location>
        <begin position="151"/>
        <end position="165"/>
    </location>
</feature>
<feature type="binding site" evidence="1">
    <location>
        <position position="191"/>
    </location>
    <ligand>
        <name>a metal cation</name>
        <dbReference type="ChEBI" id="CHEBI:25213"/>
    </ligand>
</feature>
<feature type="binding site" evidence="1">
    <location>
        <position position="194"/>
    </location>
    <ligand>
        <name>a metal cation</name>
        <dbReference type="ChEBI" id="CHEBI:25213"/>
    </ligand>
</feature>
<feature type="splice variant" id="VSP_058510" description="In isoform 2.">
    <location>
        <position position="180"/>
    </location>
</feature>
<feature type="sequence conflict" description="In Ref. 4; AAN08440." evidence="5" ref="4">
    <original>V</original>
    <variation>A</variation>
    <location>
        <position position="254"/>
    </location>
</feature>
<evidence type="ECO:0000255" key="1">
    <source>
        <dbReference type="PROSITE-ProRule" id="PRU00280"/>
    </source>
</evidence>
<evidence type="ECO:0000256" key="2">
    <source>
        <dbReference type="SAM" id="MobiDB-lite"/>
    </source>
</evidence>
<evidence type="ECO:0000303" key="3">
    <source>
    </source>
</evidence>
<evidence type="ECO:0000303" key="4">
    <source>
    </source>
</evidence>
<evidence type="ECO:0000305" key="5"/>
<evidence type="ECO:0000312" key="6">
    <source>
        <dbReference type="Araport" id="AT2G37390"/>
    </source>
</evidence>
<evidence type="ECO:0000312" key="7">
    <source>
        <dbReference type="EMBL" id="AAC98058.1"/>
    </source>
</evidence>
<evidence type="ECO:0000312" key="8">
    <source>
        <dbReference type="EMBL" id="AAX55145.1"/>
    </source>
</evidence>
<keyword id="KW-0025">Alternative splicing</keyword>
<keyword id="KW-0479">Metal-binding</keyword>
<keyword id="KW-1185">Reference proteome</keyword>
<name>NAKR2_ARATH</name>
<organism evidence="8">
    <name type="scientific">Arabidopsis thaliana</name>
    <name type="common">Mouse-ear cress</name>
    <dbReference type="NCBI Taxonomy" id="3702"/>
    <lineage>
        <taxon>Eukaryota</taxon>
        <taxon>Viridiplantae</taxon>
        <taxon>Streptophyta</taxon>
        <taxon>Embryophyta</taxon>
        <taxon>Tracheophyta</taxon>
        <taxon>Spermatophyta</taxon>
        <taxon>Magnoliopsida</taxon>
        <taxon>eudicotyledons</taxon>
        <taxon>Gunneridae</taxon>
        <taxon>Pentapetalae</taxon>
        <taxon>rosids</taxon>
        <taxon>malvids</taxon>
        <taxon>Brassicales</taxon>
        <taxon>Brassicaceae</taxon>
        <taxon>Camelineae</taxon>
        <taxon>Arabidopsis</taxon>
    </lineage>
</organism>
<protein>
    <recommendedName>
        <fullName evidence="3">Protein SODIUM POTASSIUM ROOT DEFECTIVE 2</fullName>
        <shortName evidence="3">NaKR2</shortName>
    </recommendedName>
    <alternativeName>
        <fullName evidence="4">Heavy metal-associated plant protein 3</fullName>
        <shortName evidence="4">AtHPP03</shortName>
    </alternativeName>
</protein>
<proteinExistence type="evidence at transcript level"/>
<dbReference type="EMBL" id="AC005896">
    <property type="protein sequence ID" value="AAC98058.1"/>
    <property type="status" value="ALT_SEQ"/>
    <property type="molecule type" value="Genomic_DNA"/>
</dbReference>
<dbReference type="EMBL" id="CP002685">
    <property type="protein sequence ID" value="AEC09391.1"/>
    <property type="molecule type" value="Genomic_DNA"/>
</dbReference>
<dbReference type="EMBL" id="CP002685">
    <property type="protein sequence ID" value="AEC09392.1"/>
    <property type="molecule type" value="Genomic_DNA"/>
</dbReference>
<dbReference type="EMBL" id="AY954819">
    <property type="protein sequence ID" value="AAX55145.1"/>
    <property type="molecule type" value="mRNA"/>
</dbReference>
<dbReference type="EMBL" id="AY144105">
    <property type="protein sequence ID" value="AAN08440.1"/>
    <property type="molecule type" value="mRNA"/>
</dbReference>
<dbReference type="PIR" id="B84792">
    <property type="entry name" value="B84792"/>
</dbReference>
<dbReference type="RefSeq" id="NP_001189699.1">
    <molecule id="Q58FZ0-2"/>
    <property type="nucleotide sequence ID" value="NM_001202770.1"/>
</dbReference>
<dbReference type="RefSeq" id="NP_181275.2">
    <molecule id="Q58FZ0-1"/>
    <property type="nucleotide sequence ID" value="NM_129294.4"/>
</dbReference>
<dbReference type="SMR" id="Q58FZ0"/>
<dbReference type="FunCoup" id="Q58FZ0">
    <property type="interactions" value="85"/>
</dbReference>
<dbReference type="STRING" id="3702.Q58FZ0"/>
<dbReference type="iPTMnet" id="Q58FZ0"/>
<dbReference type="PaxDb" id="3702-AT2G37390.1"/>
<dbReference type="ProteomicsDB" id="251043">
    <molecule id="Q58FZ0-1"/>
</dbReference>
<dbReference type="DNASU" id="818315"/>
<dbReference type="EnsemblPlants" id="AT2G37390.1">
    <molecule id="Q58FZ0-1"/>
    <property type="protein sequence ID" value="AT2G37390.1"/>
    <property type="gene ID" value="AT2G37390"/>
</dbReference>
<dbReference type="EnsemblPlants" id="AT2G37390.2">
    <molecule id="Q58FZ0-2"/>
    <property type="protein sequence ID" value="AT2G37390.2"/>
    <property type="gene ID" value="AT2G37390"/>
</dbReference>
<dbReference type="GeneID" id="818315"/>
<dbReference type="Gramene" id="AT2G37390.1">
    <molecule id="Q58FZ0-1"/>
    <property type="protein sequence ID" value="AT2G37390.1"/>
    <property type="gene ID" value="AT2G37390"/>
</dbReference>
<dbReference type="Gramene" id="AT2G37390.2">
    <molecule id="Q58FZ0-2"/>
    <property type="protein sequence ID" value="AT2G37390.2"/>
    <property type="gene ID" value="AT2G37390"/>
</dbReference>
<dbReference type="KEGG" id="ath:AT2G37390"/>
<dbReference type="Araport" id="AT2G37390"/>
<dbReference type="TAIR" id="AT2G37390">
    <property type="gene designation" value="NAKR2"/>
</dbReference>
<dbReference type="eggNOG" id="KOG1603">
    <property type="taxonomic scope" value="Eukaryota"/>
</dbReference>
<dbReference type="HOGENOM" id="CLU_071922_0_0_1"/>
<dbReference type="InParanoid" id="Q58FZ0"/>
<dbReference type="OMA" id="FWTTPTI"/>
<dbReference type="PhylomeDB" id="Q58FZ0"/>
<dbReference type="PRO" id="PR:Q58FZ0"/>
<dbReference type="Proteomes" id="UP000006548">
    <property type="component" value="Chromosome 2"/>
</dbReference>
<dbReference type="ExpressionAtlas" id="Q58FZ0">
    <property type="expression patterns" value="baseline and differential"/>
</dbReference>
<dbReference type="GO" id="GO:0046872">
    <property type="term" value="F:metal ion binding"/>
    <property type="evidence" value="ECO:0007669"/>
    <property type="project" value="UniProtKB-KW"/>
</dbReference>
<dbReference type="CDD" id="cd00371">
    <property type="entry name" value="HMA"/>
    <property type="match status" value="1"/>
</dbReference>
<dbReference type="Gene3D" id="3.30.70.100">
    <property type="match status" value="1"/>
</dbReference>
<dbReference type="InterPro" id="IPR006121">
    <property type="entry name" value="HMA_dom"/>
</dbReference>
<dbReference type="InterPro" id="IPR036163">
    <property type="entry name" value="HMA_dom_sf"/>
</dbReference>
<dbReference type="InterPro" id="IPR044526">
    <property type="entry name" value="NAKR1-3"/>
</dbReference>
<dbReference type="InterPro" id="IPR016578">
    <property type="entry name" value="NAKR2/3"/>
</dbReference>
<dbReference type="PANTHER" id="PTHR46119">
    <property type="entry name" value="OS08G0405700 PROTEIN"/>
    <property type="match status" value="1"/>
</dbReference>
<dbReference type="PANTHER" id="PTHR46119:SF15">
    <property type="entry name" value="PROTEIN SODIUM POTASSIUM ROOT DEFECTIVE 2"/>
    <property type="match status" value="1"/>
</dbReference>
<dbReference type="Pfam" id="PF00403">
    <property type="entry name" value="HMA"/>
    <property type="match status" value="1"/>
</dbReference>
<dbReference type="PIRSF" id="PIRSF011221">
    <property type="entry name" value="Chloropl_CC_prd"/>
    <property type="match status" value="1"/>
</dbReference>
<dbReference type="SUPFAM" id="SSF55008">
    <property type="entry name" value="HMA, heavy metal-associated domain"/>
    <property type="match status" value="1"/>
</dbReference>
<dbReference type="PROSITE" id="PS50846">
    <property type="entry name" value="HMA_2"/>
    <property type="match status" value="1"/>
</dbReference>